<sequence length="222" mass="24448">MKKQLVNMKGTKDGFVLRLDDQCAYSDLVEELKKKVLEGGIDGKVDVQLYLGYRYCTDEQIDELIHIVQETEQLIVASVQSEVLTVHESNQKMIESQQDTYLGVVRSGQILRSSGDIIIVGNVNPNGRVEAGGNVYVLGKLKGIVHAGVQGNKEAIIAASQFEATHIMIADQVEAMSDEHVKEINQAEMTCAFIGYDGRITYDQIHALKNIRPLLNVSKGGS</sequence>
<evidence type="ECO:0000255" key="1">
    <source>
        <dbReference type="HAMAP-Rule" id="MF_00267"/>
    </source>
</evidence>
<name>MINC_LYSSC</name>
<feature type="chain" id="PRO_1000191252" description="Probable septum site-determining protein MinC">
    <location>
        <begin position="1"/>
        <end position="222"/>
    </location>
</feature>
<accession>B1HVC0</accession>
<organism>
    <name type="scientific">Lysinibacillus sphaericus (strain C3-41)</name>
    <dbReference type="NCBI Taxonomy" id="444177"/>
    <lineage>
        <taxon>Bacteria</taxon>
        <taxon>Bacillati</taxon>
        <taxon>Bacillota</taxon>
        <taxon>Bacilli</taxon>
        <taxon>Bacillales</taxon>
        <taxon>Bacillaceae</taxon>
        <taxon>Lysinibacillus</taxon>
    </lineage>
</organism>
<proteinExistence type="inferred from homology"/>
<protein>
    <recommendedName>
        <fullName evidence="1">Probable septum site-determining protein MinC</fullName>
    </recommendedName>
</protein>
<reference key="1">
    <citation type="journal article" date="2008" name="J. Bacteriol.">
        <title>Complete genome sequence of the mosquitocidal bacterium Bacillus sphaericus C3-41 and comparison with those of closely related Bacillus species.</title>
        <authorList>
            <person name="Hu X."/>
            <person name="Fan W."/>
            <person name="Han B."/>
            <person name="Liu H."/>
            <person name="Zheng D."/>
            <person name="Li Q."/>
            <person name="Dong W."/>
            <person name="Yan J."/>
            <person name="Gao M."/>
            <person name="Berry C."/>
            <person name="Yuan Z."/>
        </authorList>
    </citation>
    <scope>NUCLEOTIDE SEQUENCE [LARGE SCALE GENOMIC DNA]</scope>
    <source>
        <strain>C3-41</strain>
    </source>
</reference>
<gene>
    <name evidence="1" type="primary">minC</name>
    <name type="ordered locus">Bsph_3954</name>
</gene>
<comment type="function">
    <text evidence="1">Cell division inhibitor that blocks the formation of polar Z ring septums. Rapidly oscillates between the poles of the cell to destabilize FtsZ filaments that have formed before they mature into polar Z rings. Prevents FtsZ polymerization.</text>
</comment>
<comment type="subunit">
    <text evidence="1">Interacts with MinD and FtsZ.</text>
</comment>
<comment type="similarity">
    <text evidence="1">Belongs to the MinC family.</text>
</comment>
<dbReference type="EMBL" id="CP000817">
    <property type="protein sequence ID" value="ACA41422.1"/>
    <property type="molecule type" value="Genomic_DNA"/>
</dbReference>
<dbReference type="RefSeq" id="WP_012295466.1">
    <property type="nucleotide sequence ID" value="NC_010382.1"/>
</dbReference>
<dbReference type="SMR" id="B1HVC0"/>
<dbReference type="EnsemblBacteria" id="ACA41422">
    <property type="protein sequence ID" value="ACA41422"/>
    <property type="gene ID" value="Bsph_3954"/>
</dbReference>
<dbReference type="KEGG" id="lsp:Bsph_3954"/>
<dbReference type="HOGENOM" id="CLU_048711_1_1_9"/>
<dbReference type="Proteomes" id="UP000002164">
    <property type="component" value="Chromosome"/>
</dbReference>
<dbReference type="GO" id="GO:0000902">
    <property type="term" value="P:cell morphogenesis"/>
    <property type="evidence" value="ECO:0007669"/>
    <property type="project" value="InterPro"/>
</dbReference>
<dbReference type="GO" id="GO:0000917">
    <property type="term" value="P:division septum assembly"/>
    <property type="evidence" value="ECO:0007669"/>
    <property type="project" value="UniProtKB-KW"/>
</dbReference>
<dbReference type="GO" id="GO:1901891">
    <property type="term" value="P:regulation of cell septum assembly"/>
    <property type="evidence" value="ECO:0007669"/>
    <property type="project" value="InterPro"/>
</dbReference>
<dbReference type="Gene3D" id="2.160.20.70">
    <property type="match status" value="1"/>
</dbReference>
<dbReference type="Gene3D" id="3.30.160.540">
    <property type="match status" value="1"/>
</dbReference>
<dbReference type="HAMAP" id="MF_00267">
    <property type="entry name" value="MinC"/>
    <property type="match status" value="1"/>
</dbReference>
<dbReference type="InterPro" id="IPR016098">
    <property type="entry name" value="CAP/MinC_C"/>
</dbReference>
<dbReference type="InterPro" id="IPR013033">
    <property type="entry name" value="MinC"/>
</dbReference>
<dbReference type="InterPro" id="IPR036145">
    <property type="entry name" value="MinC_C_sf"/>
</dbReference>
<dbReference type="InterPro" id="IPR055219">
    <property type="entry name" value="MinC_N_1"/>
</dbReference>
<dbReference type="InterPro" id="IPR005526">
    <property type="entry name" value="Septum_form_inhib_MinC_C"/>
</dbReference>
<dbReference type="NCBIfam" id="NF001772">
    <property type="entry name" value="PRK00513.1-3"/>
    <property type="match status" value="1"/>
</dbReference>
<dbReference type="PANTHER" id="PTHR34108">
    <property type="entry name" value="SEPTUM SITE-DETERMINING PROTEIN MINC"/>
    <property type="match status" value="1"/>
</dbReference>
<dbReference type="PANTHER" id="PTHR34108:SF1">
    <property type="entry name" value="SEPTUM SITE-DETERMINING PROTEIN MINC"/>
    <property type="match status" value="1"/>
</dbReference>
<dbReference type="Pfam" id="PF03775">
    <property type="entry name" value="MinC_C"/>
    <property type="match status" value="1"/>
</dbReference>
<dbReference type="Pfam" id="PF22642">
    <property type="entry name" value="MinC_N_1"/>
    <property type="match status" value="1"/>
</dbReference>
<dbReference type="SUPFAM" id="SSF63848">
    <property type="entry name" value="Cell-division inhibitor MinC, C-terminal domain"/>
    <property type="match status" value="1"/>
</dbReference>
<keyword id="KW-0131">Cell cycle</keyword>
<keyword id="KW-0132">Cell division</keyword>
<keyword id="KW-0717">Septation</keyword>